<comment type="function">
    <text evidence="1">Mnh complex is a Na(+)/H(+) antiporter involved in Na(+) excretion.</text>
</comment>
<comment type="subunit">
    <text evidence="1">May form a heterooligomeric complex that consists of seven subunits: mnhA1, mnhB1, mnhC1, mnhD1, mnhE1, mnhF1 and mnhG1.</text>
</comment>
<comment type="subcellular location">
    <subcellularLocation>
        <location evidence="3">Cell membrane</location>
        <topology evidence="3">Multi-pass membrane protein</topology>
    </subcellularLocation>
</comment>
<comment type="similarity">
    <text evidence="3">Belongs to the CPA3 antiporters (TC 2.A.63) subunit B family.</text>
</comment>
<dbReference type="EMBL" id="BA000033">
    <property type="protein sequence ID" value="BAB94698.1"/>
    <property type="molecule type" value="Genomic_DNA"/>
</dbReference>
<dbReference type="PIR" id="H89861">
    <property type="entry name" value="H89861"/>
</dbReference>
<dbReference type="RefSeq" id="WP_001081626.1">
    <property type="nucleotide sequence ID" value="NC_003923.1"/>
</dbReference>
<dbReference type="SMR" id="P60679"/>
<dbReference type="GeneID" id="66839149"/>
<dbReference type="KEGG" id="sam:MW0833"/>
<dbReference type="HOGENOM" id="CLU_101659_1_1_9"/>
<dbReference type="GO" id="GO:0005886">
    <property type="term" value="C:plasma membrane"/>
    <property type="evidence" value="ECO:0007669"/>
    <property type="project" value="UniProtKB-SubCell"/>
</dbReference>
<dbReference type="GO" id="GO:0015297">
    <property type="term" value="F:antiporter activity"/>
    <property type="evidence" value="ECO:0007669"/>
    <property type="project" value="UniProtKB-KW"/>
</dbReference>
<dbReference type="GO" id="GO:0008324">
    <property type="term" value="F:monoatomic cation transmembrane transporter activity"/>
    <property type="evidence" value="ECO:0007669"/>
    <property type="project" value="InterPro"/>
</dbReference>
<dbReference type="GO" id="GO:1902600">
    <property type="term" value="P:proton transmembrane transport"/>
    <property type="evidence" value="ECO:0007669"/>
    <property type="project" value="UniProtKB-KW"/>
</dbReference>
<dbReference type="GO" id="GO:0006814">
    <property type="term" value="P:sodium ion transport"/>
    <property type="evidence" value="ECO:0007669"/>
    <property type="project" value="UniProtKB-KW"/>
</dbReference>
<dbReference type="InterPro" id="IPR050622">
    <property type="entry name" value="CPA3_antiporter_subunitB"/>
</dbReference>
<dbReference type="InterPro" id="IPR005281">
    <property type="entry name" value="CPA3_sub_B"/>
</dbReference>
<dbReference type="InterPro" id="IPR007182">
    <property type="entry name" value="MnhB"/>
</dbReference>
<dbReference type="NCBIfam" id="TIGR00943">
    <property type="entry name" value="2a6301s02"/>
    <property type="match status" value="1"/>
</dbReference>
<dbReference type="NCBIfam" id="NF009223">
    <property type="entry name" value="PRK12573.1"/>
    <property type="match status" value="1"/>
</dbReference>
<dbReference type="PANTHER" id="PTHR33932">
    <property type="entry name" value="NA(+)/H(+) ANTIPORTER SUBUNIT B"/>
    <property type="match status" value="1"/>
</dbReference>
<dbReference type="PANTHER" id="PTHR33932:SF4">
    <property type="entry name" value="NA(+)_H(+) ANTIPORTER SUBUNIT B"/>
    <property type="match status" value="1"/>
</dbReference>
<dbReference type="Pfam" id="PF04039">
    <property type="entry name" value="MnhB"/>
    <property type="match status" value="1"/>
</dbReference>
<gene>
    <name type="primary">mnhB1</name>
    <name type="ordered locus">MW0833</name>
</gene>
<evidence type="ECO:0000250" key="1"/>
<evidence type="ECO:0000255" key="2"/>
<evidence type="ECO:0000305" key="3"/>
<reference key="1">
    <citation type="journal article" date="2002" name="Lancet">
        <title>Genome and virulence determinants of high virulence community-acquired MRSA.</title>
        <authorList>
            <person name="Baba T."/>
            <person name="Takeuchi F."/>
            <person name="Kuroda M."/>
            <person name="Yuzawa H."/>
            <person name="Aoki K."/>
            <person name="Oguchi A."/>
            <person name="Nagai Y."/>
            <person name="Iwama N."/>
            <person name="Asano K."/>
            <person name="Naimi T."/>
            <person name="Kuroda H."/>
            <person name="Cui L."/>
            <person name="Yamamoto K."/>
            <person name="Hiramatsu K."/>
        </authorList>
    </citation>
    <scope>NUCLEOTIDE SEQUENCE [LARGE SCALE GENOMIC DNA]</scope>
    <source>
        <strain>MW2</strain>
    </source>
</reference>
<proteinExistence type="inferred from homology"/>
<accession>P60679</accession>
<accession>Q9ZNG5</accession>
<name>MNHB1_STAAW</name>
<keyword id="KW-0050">Antiport</keyword>
<keyword id="KW-1003">Cell membrane</keyword>
<keyword id="KW-0375">Hydrogen ion transport</keyword>
<keyword id="KW-0406">Ion transport</keyword>
<keyword id="KW-0472">Membrane</keyword>
<keyword id="KW-0915">Sodium</keyword>
<keyword id="KW-0739">Sodium transport</keyword>
<keyword id="KW-0812">Transmembrane</keyword>
<keyword id="KW-1133">Transmembrane helix</keyword>
<keyword id="KW-0813">Transport</keyword>
<feature type="chain" id="PRO_0000088862" description="Na(+)/H(+) antiporter subunit B1">
    <location>
        <begin position="1"/>
        <end position="142"/>
    </location>
</feature>
<feature type="transmembrane region" description="Helical" evidence="2">
    <location>
        <begin position="9"/>
        <end position="31"/>
    </location>
</feature>
<feature type="transmembrane region" description="Helical" evidence="2">
    <location>
        <begin position="35"/>
        <end position="57"/>
    </location>
</feature>
<feature type="transmembrane region" description="Helical" evidence="2">
    <location>
        <begin position="70"/>
        <end position="92"/>
    </location>
</feature>
<feature type="transmembrane region" description="Helical" evidence="2">
    <location>
        <begin position="116"/>
        <end position="138"/>
    </location>
</feature>
<protein>
    <recommendedName>
        <fullName>Na(+)/H(+) antiporter subunit B1</fullName>
    </recommendedName>
    <alternativeName>
        <fullName>Mnh complex subunit B1</fullName>
    </alternativeName>
</protein>
<organism>
    <name type="scientific">Staphylococcus aureus (strain MW2)</name>
    <dbReference type="NCBI Taxonomy" id="196620"/>
    <lineage>
        <taxon>Bacteria</taxon>
        <taxon>Bacillati</taxon>
        <taxon>Bacillota</taxon>
        <taxon>Bacilli</taxon>
        <taxon>Bacillales</taxon>
        <taxon>Staphylococcaceae</taxon>
        <taxon>Staphylococcus</taxon>
    </lineage>
</organism>
<sequence>MNRQQNDLILQFAAVIIFFMVMVFGFSLFLAGHYTPGGGFVGGLLFASSLVIITIAFDIETMRKIFPLDFKILIGIGLVFCIATPIASWFLGKNFFTHVTFDIPLFILEPVHMTTAVFFDFGVLCAVVGTVMTIIISIGENE</sequence>